<sequence length="360" mass="39033">MKAIIVLLMVVTSNADRICTGITSSNSPHVVKTATQGEVNVTGVIPLTTTPTKSHFANLKGTKTRGKLCPNCLNCTDLDVALARPMCIGTIPSAKASILHEVRPVTSGCFPIMHDRTKIRQLPNLLRGYENIRLSTHNVINAERAPGGPYRLGTSGSCPNVTSRSGFFATMAWAVPRDNKTATNPLTVEVPYICTKGEDQITVWGFHSDNKTQMKNLYGDSNPQKFTSSANGVTTHYVSQIGGFPNQTEDGGLPQSGRIVVDYMVQKPGKTGTIVYQRGVLLPQKVWCASGRSKVIKGSLPLIGEADCLHEKYGGLNKSKPYYTGEHAKAIGNCPIWVKTPLKLANGTKYRPPAKLLKER</sequence>
<organism>
    <name type="scientific">Influenza B virus (strain B/New York/3/1990)</name>
    <dbReference type="NCBI Taxonomy" id="291801"/>
    <lineage>
        <taxon>Viruses</taxon>
        <taxon>Riboviria</taxon>
        <taxon>Orthornavirae</taxon>
        <taxon>Negarnaviricota</taxon>
        <taxon>Polyploviricotina</taxon>
        <taxon>Insthoviricetes</taxon>
        <taxon>Articulavirales</taxon>
        <taxon>Orthomyxoviridae</taxon>
        <taxon>Betainfluenzavirus</taxon>
        <taxon>Betainfluenzavirus influenzae</taxon>
        <taxon>Influenza B virus</taxon>
    </lineage>
</organism>
<feature type="signal peptide" evidence="2">
    <location>
        <begin position="1"/>
        <end position="15"/>
    </location>
</feature>
<feature type="chain" id="PRO_0000039121" description="Hemagglutinin HA1 chain" evidence="1">
    <location>
        <begin position="16"/>
        <end position="360"/>
    </location>
</feature>
<feature type="glycosylation site" description="N-linked (GlcNAc...) asparagine; by host" evidence="2">
    <location>
        <position position="40"/>
    </location>
</feature>
<feature type="glycosylation site" description="N-linked (GlcNAc...) asparagine; by host" evidence="2">
    <location>
        <position position="74"/>
    </location>
</feature>
<feature type="glycosylation site" description="N-linked (GlcNAc...) asparagine; by host" evidence="2">
    <location>
        <position position="160"/>
    </location>
</feature>
<feature type="glycosylation site" description="N-linked (GlcNAc...) asparagine; by host" evidence="2">
    <location>
        <position position="179"/>
    </location>
</feature>
<feature type="glycosylation site" description="N-linked (GlcNAc...) asparagine; by host" evidence="2">
    <location>
        <position position="210"/>
    </location>
</feature>
<feature type="glycosylation site" description="N-linked (GlcNAc...) asparagine; by host" evidence="2">
    <location>
        <position position="246"/>
    </location>
</feature>
<feature type="glycosylation site" description="N-linked (GlcNAc...) asparagine; by host" evidence="2">
    <location>
        <position position="317"/>
    </location>
</feature>
<feature type="glycosylation site" description="N-linked (GlcNAc...) asparagine; by host" evidence="2">
    <location>
        <position position="346"/>
    </location>
</feature>
<feature type="non-terminal residue">
    <location>
        <position position="360"/>
    </location>
</feature>
<accession>Q67374</accession>
<comment type="function">
    <text>Binds to sialic acid-containing receptors on the cell surface, bringing about the attachment of the virus particle to the cell. Plays a major role in the determination of host range restriction and virulence. Class I viral fusion protein. Responsible for penetration of the virus into the cell cytoplasm by mediating the fusion of the membrane of the endocytosed virus particle with the endosomal membrane. Low pH in endosomes induce an irreversible conformational change in HA2, releasing the fusion hydrophobic peptide. Several trimers are required to form a competent fusion pore.</text>
</comment>
<comment type="subunit">
    <text>Homotrimer of disulfide-linked HA1-HA2.</text>
</comment>
<comment type="subcellular location">
    <subcellularLocation>
        <location evidence="3">Virion membrane</location>
        <topology evidence="3">Single-pass type I membrane protein</topology>
    </subcellularLocation>
    <subcellularLocation>
        <location>Host apical cell membrane</location>
        <topology>Single-pass type I membrane protein</topology>
    </subcellularLocation>
    <text>Targeted to the apical plasma membrane in epithelial polarized cells through a signal present in the transmembrane domain. Associated with glycosphingolipid- and cholesterol-enriched detergent-resistant lipid rafts.</text>
</comment>
<comment type="PTM">
    <text evidence="1">In natural infection, inactive HA is matured into HA1 and HA2 outside the cell by one or more trypsin-like, arginine-specific endoprotease secreted by the bronchial epithelial cells. One identified protease that may be involved in this process is secreted in lungs by club cells (By similarity).</text>
</comment>
<comment type="PTM">
    <text evidence="1">Palmitoylated.</text>
</comment>
<comment type="miscellaneous">
    <text>Major glycoprotein, comprises over 80% of the envelope proteins present in virus particle.</text>
</comment>
<comment type="miscellaneous">
    <text>The extent of infection into host organism is determined by HA. Influenza viruses bud from the apical surface of polarized epithelial cells (e.g. bronchial epithelial cells) into lumen of lungs and are therefore usually pneumotropic. The reason is that HA is cleaved by tryptase clara which is restricted to lungs. However, HAs of H5 and H7 pantropic avian viruses subtypes can be cleaved by furin and subtilisin-type enzymes, allowing the virus to grow in other organs than lungs.</text>
</comment>
<comment type="miscellaneous">
    <text>The influenza B genome consist of 8 RNA segments. Genetic variation of hemagglutinin and/or neuraminidase genes results in the emergence of new influenza strains. The mechanism of variation can be the result of point mutations or the result of genetic reassortment between segments of two different strains.</text>
</comment>
<comment type="similarity">
    <text evidence="3">Belongs to the influenza viruses hemagglutinin family.</text>
</comment>
<name>HEMA_INBNY</name>
<proteinExistence type="inferred from homology"/>
<evidence type="ECO:0000250" key="1"/>
<evidence type="ECO:0000255" key="2"/>
<evidence type="ECO:0000305" key="3"/>
<gene>
    <name type="primary">HA</name>
</gene>
<reference key="1">
    <citation type="journal article" date="1992" name="J. Gen. Virol.">
        <title>Antigenic and genetic characterization of the haemagglutinins of recent cocirculating strains of influenza B virus.</title>
        <authorList>
            <person name="Rota P.A."/>
            <person name="Hemphill M."/>
            <person name="Whistler T."/>
            <person name="Regnery H.L."/>
            <person name="Kendal A.P."/>
        </authorList>
    </citation>
    <scope>NUCLEOTIDE SEQUENCE [GENOMIC RNA]</scope>
</reference>
<keyword id="KW-1015">Disulfide bond</keyword>
<keyword id="KW-1170">Fusion of virus membrane with host endosomal membrane</keyword>
<keyword id="KW-1168">Fusion of virus membrane with host membrane</keyword>
<keyword id="KW-0325">Glycoprotein</keyword>
<keyword id="KW-0348">Hemagglutinin</keyword>
<keyword id="KW-1032">Host cell membrane</keyword>
<keyword id="KW-1043">Host membrane</keyword>
<keyword id="KW-0945">Host-virus interaction</keyword>
<keyword id="KW-0449">Lipoprotein</keyword>
<keyword id="KW-0472">Membrane</keyword>
<keyword id="KW-0564">Palmitate</keyword>
<keyword id="KW-0732">Signal</keyword>
<keyword id="KW-0812">Transmembrane</keyword>
<keyword id="KW-1161">Viral attachment to host cell</keyword>
<keyword id="KW-0261">Viral envelope protein</keyword>
<keyword id="KW-1162">Viral penetration into host cytoplasm</keyword>
<keyword id="KW-0946">Virion</keyword>
<keyword id="KW-1160">Virus entry into host cell</keyword>
<dbReference type="EMBL" id="M65170">
    <property type="protein sequence ID" value="AAA43708.1"/>
    <property type="molecule type" value="Genomic_RNA"/>
</dbReference>
<dbReference type="PIR" id="JQ1913">
    <property type="entry name" value="JQ1913"/>
</dbReference>
<dbReference type="SMR" id="Q67374"/>
<dbReference type="GlyCosmos" id="Q67374">
    <property type="glycosylation" value="8 sites, No reported glycans"/>
</dbReference>
<dbReference type="GO" id="GO:0020002">
    <property type="term" value="C:host cell plasma membrane"/>
    <property type="evidence" value="ECO:0007669"/>
    <property type="project" value="UniProtKB-SubCell"/>
</dbReference>
<dbReference type="GO" id="GO:0016020">
    <property type="term" value="C:membrane"/>
    <property type="evidence" value="ECO:0007669"/>
    <property type="project" value="UniProtKB-KW"/>
</dbReference>
<dbReference type="GO" id="GO:0019031">
    <property type="term" value="C:viral envelope"/>
    <property type="evidence" value="ECO:0007669"/>
    <property type="project" value="UniProtKB-KW"/>
</dbReference>
<dbReference type="GO" id="GO:0055036">
    <property type="term" value="C:virion membrane"/>
    <property type="evidence" value="ECO:0007669"/>
    <property type="project" value="UniProtKB-SubCell"/>
</dbReference>
<dbReference type="GO" id="GO:0046789">
    <property type="term" value="F:host cell surface receptor binding"/>
    <property type="evidence" value="ECO:0007669"/>
    <property type="project" value="InterPro"/>
</dbReference>
<dbReference type="GO" id="GO:0039654">
    <property type="term" value="P:fusion of virus membrane with host endosome membrane"/>
    <property type="evidence" value="ECO:0007669"/>
    <property type="project" value="UniProtKB-KW"/>
</dbReference>
<dbReference type="GO" id="GO:0019064">
    <property type="term" value="P:fusion of virus membrane with host plasma membrane"/>
    <property type="evidence" value="ECO:0007669"/>
    <property type="project" value="InterPro"/>
</dbReference>
<dbReference type="GO" id="GO:0046718">
    <property type="term" value="P:symbiont entry into host cell"/>
    <property type="evidence" value="ECO:0007669"/>
    <property type="project" value="UniProtKB-KW"/>
</dbReference>
<dbReference type="GO" id="GO:0019062">
    <property type="term" value="P:virion attachment to host cell"/>
    <property type="evidence" value="ECO:0007669"/>
    <property type="project" value="UniProtKB-KW"/>
</dbReference>
<dbReference type="Gene3D" id="3.90.209.20">
    <property type="match status" value="1"/>
</dbReference>
<dbReference type="Gene3D" id="2.10.77.10">
    <property type="entry name" value="Hemagglutinin Chain A, Domain 2"/>
    <property type="match status" value="1"/>
</dbReference>
<dbReference type="InterPro" id="IPR008980">
    <property type="entry name" value="Capsid_hemagglutn"/>
</dbReference>
<dbReference type="InterPro" id="IPR013828">
    <property type="entry name" value="Hemagglutn_HA1_a/b_dom_sf"/>
</dbReference>
<dbReference type="InterPro" id="IPR001364">
    <property type="entry name" value="Hemagglutn_influenz_A/B"/>
</dbReference>
<dbReference type="Pfam" id="PF00509">
    <property type="entry name" value="Hemagglutinin"/>
    <property type="match status" value="1"/>
</dbReference>
<dbReference type="SUPFAM" id="SSF49818">
    <property type="entry name" value="Viral protein domain"/>
    <property type="match status" value="1"/>
</dbReference>
<organismHost>
    <name type="scientific">Homo sapiens</name>
    <name type="common">Human</name>
    <dbReference type="NCBI Taxonomy" id="9606"/>
</organismHost>
<protein>
    <recommendedName>
        <fullName>Hemagglutinin</fullName>
    </recommendedName>
    <component>
        <recommendedName>
            <fullName>Hemagglutinin HA1 chain</fullName>
        </recommendedName>
    </component>
</protein>